<gene>
    <name evidence="1" type="primary">hemE</name>
    <name type="ordered locus">lpp2010</name>
</gene>
<reference key="1">
    <citation type="journal article" date="2004" name="Nat. Genet.">
        <title>Evidence in the Legionella pneumophila genome for exploitation of host cell functions and high genome plasticity.</title>
        <authorList>
            <person name="Cazalet C."/>
            <person name="Rusniok C."/>
            <person name="Brueggemann H."/>
            <person name="Zidane N."/>
            <person name="Magnier A."/>
            <person name="Ma L."/>
            <person name="Tichit M."/>
            <person name="Jarraud S."/>
            <person name="Bouchier C."/>
            <person name="Vandenesch F."/>
            <person name="Kunst F."/>
            <person name="Etienne J."/>
            <person name="Glaser P."/>
            <person name="Buchrieser C."/>
        </authorList>
    </citation>
    <scope>NUCLEOTIDE SEQUENCE [LARGE SCALE GENOMIC DNA]</scope>
    <source>
        <strain>Paris</strain>
    </source>
</reference>
<name>DCUP_LEGPA</name>
<proteinExistence type="inferred from homology"/>
<keyword id="KW-0963">Cytoplasm</keyword>
<keyword id="KW-0210">Decarboxylase</keyword>
<keyword id="KW-0456">Lyase</keyword>
<keyword id="KW-0627">Porphyrin biosynthesis</keyword>
<accession>Q5X3M4</accession>
<comment type="function">
    <text evidence="1">Catalyzes the decarboxylation of four acetate groups of uroporphyrinogen-III to yield coproporphyrinogen-III.</text>
</comment>
<comment type="catalytic activity">
    <reaction evidence="1">
        <text>uroporphyrinogen III + 4 H(+) = coproporphyrinogen III + 4 CO2</text>
        <dbReference type="Rhea" id="RHEA:19865"/>
        <dbReference type="ChEBI" id="CHEBI:15378"/>
        <dbReference type="ChEBI" id="CHEBI:16526"/>
        <dbReference type="ChEBI" id="CHEBI:57308"/>
        <dbReference type="ChEBI" id="CHEBI:57309"/>
        <dbReference type="EC" id="4.1.1.37"/>
    </reaction>
</comment>
<comment type="pathway">
    <text evidence="1">Porphyrin-containing compound metabolism; protoporphyrin-IX biosynthesis; coproporphyrinogen-III from 5-aminolevulinate: step 4/4.</text>
</comment>
<comment type="subunit">
    <text evidence="1">Homodimer.</text>
</comment>
<comment type="subcellular location">
    <subcellularLocation>
        <location evidence="1">Cytoplasm</location>
    </subcellularLocation>
</comment>
<comment type="similarity">
    <text evidence="1">Belongs to the uroporphyrinogen decarboxylase family.</text>
</comment>
<protein>
    <recommendedName>
        <fullName evidence="1">Uroporphyrinogen decarboxylase</fullName>
        <shortName evidence="1">UPD</shortName>
        <shortName evidence="1">URO-D</shortName>
        <ecNumber evidence="1">4.1.1.37</ecNumber>
    </recommendedName>
</protein>
<dbReference type="EC" id="4.1.1.37" evidence="1"/>
<dbReference type="EMBL" id="CR628336">
    <property type="protein sequence ID" value="CAH13162.1"/>
    <property type="molecule type" value="Genomic_DNA"/>
</dbReference>
<dbReference type="RefSeq" id="WP_011214274.1">
    <property type="nucleotide sequence ID" value="NC_006368.1"/>
</dbReference>
<dbReference type="SMR" id="Q5X3M4"/>
<dbReference type="KEGG" id="lpp:lpp2010"/>
<dbReference type="LegioList" id="lpp2010"/>
<dbReference type="HOGENOM" id="CLU_040933_0_0_6"/>
<dbReference type="UniPathway" id="UPA00251">
    <property type="reaction ID" value="UER00321"/>
</dbReference>
<dbReference type="GO" id="GO:0005829">
    <property type="term" value="C:cytosol"/>
    <property type="evidence" value="ECO:0007669"/>
    <property type="project" value="TreeGrafter"/>
</dbReference>
<dbReference type="GO" id="GO:0004853">
    <property type="term" value="F:uroporphyrinogen decarboxylase activity"/>
    <property type="evidence" value="ECO:0007669"/>
    <property type="project" value="UniProtKB-UniRule"/>
</dbReference>
<dbReference type="GO" id="GO:0019353">
    <property type="term" value="P:protoporphyrinogen IX biosynthetic process from glutamate"/>
    <property type="evidence" value="ECO:0007669"/>
    <property type="project" value="TreeGrafter"/>
</dbReference>
<dbReference type="CDD" id="cd00717">
    <property type="entry name" value="URO-D"/>
    <property type="match status" value="1"/>
</dbReference>
<dbReference type="FunFam" id="3.20.20.210:FF:000001">
    <property type="entry name" value="Uroporphyrinogen decarboxylase"/>
    <property type="match status" value="1"/>
</dbReference>
<dbReference type="Gene3D" id="3.20.20.210">
    <property type="match status" value="1"/>
</dbReference>
<dbReference type="HAMAP" id="MF_00218">
    <property type="entry name" value="URO_D"/>
    <property type="match status" value="1"/>
</dbReference>
<dbReference type="InterPro" id="IPR038071">
    <property type="entry name" value="UROD/MetE-like_sf"/>
</dbReference>
<dbReference type="InterPro" id="IPR006361">
    <property type="entry name" value="Uroporphyrinogen_deCO2ase_HemE"/>
</dbReference>
<dbReference type="InterPro" id="IPR000257">
    <property type="entry name" value="Uroporphyrinogen_deCOase"/>
</dbReference>
<dbReference type="NCBIfam" id="TIGR01464">
    <property type="entry name" value="hemE"/>
    <property type="match status" value="1"/>
</dbReference>
<dbReference type="PANTHER" id="PTHR21091">
    <property type="entry name" value="METHYLTETRAHYDROFOLATE:HOMOCYSTEINE METHYLTRANSFERASE RELATED"/>
    <property type="match status" value="1"/>
</dbReference>
<dbReference type="PANTHER" id="PTHR21091:SF169">
    <property type="entry name" value="UROPORPHYRINOGEN DECARBOXYLASE"/>
    <property type="match status" value="1"/>
</dbReference>
<dbReference type="Pfam" id="PF01208">
    <property type="entry name" value="URO-D"/>
    <property type="match status" value="1"/>
</dbReference>
<dbReference type="SUPFAM" id="SSF51726">
    <property type="entry name" value="UROD/MetE-like"/>
    <property type="match status" value="1"/>
</dbReference>
<dbReference type="PROSITE" id="PS00906">
    <property type="entry name" value="UROD_1"/>
    <property type="match status" value="1"/>
</dbReference>
<dbReference type="PROSITE" id="PS00907">
    <property type="entry name" value="UROD_2"/>
    <property type="match status" value="1"/>
</dbReference>
<sequence length="352" mass="39313">MFDLNQSLFLRALRRQPVERTPIWIMRQAGRYLPEYRKVREHAGDFLNLCKNPELACEVTLQPLRRYALDAAILFSDILTIPDAMGLGLYFAEGEGPCFTNPLQDTKAIHALKIPSIPESLSYVFDAARLIRQEMPKELPLIGFSGSPWTLACYMVEGGSSRDFKRILNLIYTEKEAAHLLLNKLAVSVTAYLTEQIKAGVNAVMIFDTWGGVLTPQNYKDFSLAYMHQIVQQLKNEYPDIPVILFTKNGGQWLEWMAETGCDALGVDWTCDLASARKRVGGKVALQGNLDPAVLLTAKNCIRREVGSVLASYGYGTGHIFNLGHGITPDVPPENVAIMIEAVHEISPQYHL</sequence>
<evidence type="ECO:0000255" key="1">
    <source>
        <dbReference type="HAMAP-Rule" id="MF_00218"/>
    </source>
</evidence>
<feature type="chain" id="PRO_1000058641" description="Uroporphyrinogen decarboxylase">
    <location>
        <begin position="1"/>
        <end position="352"/>
    </location>
</feature>
<feature type="binding site" evidence="1">
    <location>
        <begin position="27"/>
        <end position="31"/>
    </location>
    <ligand>
        <name>substrate</name>
    </ligand>
</feature>
<feature type="binding site" evidence="1">
    <location>
        <position position="77"/>
    </location>
    <ligand>
        <name>substrate</name>
    </ligand>
</feature>
<feature type="binding site" evidence="1">
    <location>
        <position position="154"/>
    </location>
    <ligand>
        <name>substrate</name>
    </ligand>
</feature>
<feature type="binding site" evidence="1">
    <location>
        <position position="209"/>
    </location>
    <ligand>
        <name>substrate</name>
    </ligand>
</feature>
<feature type="binding site" evidence="1">
    <location>
        <position position="325"/>
    </location>
    <ligand>
        <name>substrate</name>
    </ligand>
</feature>
<feature type="site" description="Transition state stabilizer" evidence="1">
    <location>
        <position position="77"/>
    </location>
</feature>
<organism>
    <name type="scientific">Legionella pneumophila (strain Paris)</name>
    <dbReference type="NCBI Taxonomy" id="297246"/>
    <lineage>
        <taxon>Bacteria</taxon>
        <taxon>Pseudomonadati</taxon>
        <taxon>Pseudomonadota</taxon>
        <taxon>Gammaproteobacteria</taxon>
        <taxon>Legionellales</taxon>
        <taxon>Legionellaceae</taxon>
        <taxon>Legionella</taxon>
    </lineage>
</organism>